<name>YS039_HUMAN</name>
<organism>
    <name type="scientific">Homo sapiens</name>
    <name type="common">Human</name>
    <dbReference type="NCBI Taxonomy" id="9606"/>
    <lineage>
        <taxon>Eukaryota</taxon>
        <taxon>Metazoa</taxon>
        <taxon>Chordata</taxon>
        <taxon>Craniata</taxon>
        <taxon>Vertebrata</taxon>
        <taxon>Euteleostomi</taxon>
        <taxon>Mammalia</taxon>
        <taxon>Eutheria</taxon>
        <taxon>Euarchontoglires</taxon>
        <taxon>Primates</taxon>
        <taxon>Haplorrhini</taxon>
        <taxon>Catarrhini</taxon>
        <taxon>Hominidae</taxon>
        <taxon>Homo</taxon>
    </lineage>
</organism>
<protein>
    <recommendedName>
        <fullName>Putative uncharacterized protein FLJ26174</fullName>
    </recommendedName>
</protein>
<evidence type="ECO:0000256" key="1">
    <source>
        <dbReference type="SAM" id="MobiDB-lite"/>
    </source>
</evidence>
<reference key="1">
    <citation type="journal article" date="2004" name="Nat. Genet.">
        <title>Complete sequencing and characterization of 21,243 full-length human cDNAs.</title>
        <authorList>
            <person name="Ota T."/>
            <person name="Suzuki Y."/>
            <person name="Nishikawa T."/>
            <person name="Otsuki T."/>
            <person name="Sugiyama T."/>
            <person name="Irie R."/>
            <person name="Wakamatsu A."/>
            <person name="Hayashi K."/>
            <person name="Sato H."/>
            <person name="Nagai K."/>
            <person name="Kimura K."/>
            <person name="Makita H."/>
            <person name="Sekine M."/>
            <person name="Obayashi M."/>
            <person name="Nishi T."/>
            <person name="Shibahara T."/>
            <person name="Tanaka T."/>
            <person name="Ishii S."/>
            <person name="Yamamoto J."/>
            <person name="Saito K."/>
            <person name="Kawai Y."/>
            <person name="Isono Y."/>
            <person name="Nakamura Y."/>
            <person name="Nagahari K."/>
            <person name="Murakami K."/>
            <person name="Yasuda T."/>
            <person name="Iwayanagi T."/>
            <person name="Wagatsuma M."/>
            <person name="Shiratori A."/>
            <person name="Sudo H."/>
            <person name="Hosoiri T."/>
            <person name="Kaku Y."/>
            <person name="Kodaira H."/>
            <person name="Kondo H."/>
            <person name="Sugawara M."/>
            <person name="Takahashi M."/>
            <person name="Kanda K."/>
            <person name="Yokoi T."/>
            <person name="Furuya T."/>
            <person name="Kikkawa E."/>
            <person name="Omura Y."/>
            <person name="Abe K."/>
            <person name="Kamihara K."/>
            <person name="Katsuta N."/>
            <person name="Sato K."/>
            <person name="Tanikawa M."/>
            <person name="Yamazaki M."/>
            <person name="Ninomiya K."/>
            <person name="Ishibashi T."/>
            <person name="Yamashita H."/>
            <person name="Murakawa K."/>
            <person name="Fujimori K."/>
            <person name="Tanai H."/>
            <person name="Kimata M."/>
            <person name="Watanabe M."/>
            <person name="Hiraoka S."/>
            <person name="Chiba Y."/>
            <person name="Ishida S."/>
            <person name="Ono Y."/>
            <person name="Takiguchi S."/>
            <person name="Watanabe S."/>
            <person name="Yosida M."/>
            <person name="Hotuta T."/>
            <person name="Kusano J."/>
            <person name="Kanehori K."/>
            <person name="Takahashi-Fujii A."/>
            <person name="Hara H."/>
            <person name="Tanase T.-O."/>
            <person name="Nomura Y."/>
            <person name="Togiya S."/>
            <person name="Komai F."/>
            <person name="Hara R."/>
            <person name="Takeuchi K."/>
            <person name="Arita M."/>
            <person name="Imose N."/>
            <person name="Musashino K."/>
            <person name="Yuuki H."/>
            <person name="Oshima A."/>
            <person name="Sasaki N."/>
            <person name="Aotsuka S."/>
            <person name="Yoshikawa Y."/>
            <person name="Matsunawa H."/>
            <person name="Ichihara T."/>
            <person name="Shiohata N."/>
            <person name="Sano S."/>
            <person name="Moriya S."/>
            <person name="Momiyama H."/>
            <person name="Satoh N."/>
            <person name="Takami S."/>
            <person name="Terashima Y."/>
            <person name="Suzuki O."/>
            <person name="Nakagawa S."/>
            <person name="Senoh A."/>
            <person name="Mizoguchi H."/>
            <person name="Goto Y."/>
            <person name="Shimizu F."/>
            <person name="Wakebe H."/>
            <person name="Hishigaki H."/>
            <person name="Watanabe T."/>
            <person name="Sugiyama A."/>
            <person name="Takemoto M."/>
            <person name="Kawakami B."/>
            <person name="Yamazaki M."/>
            <person name="Watanabe K."/>
            <person name="Kumagai A."/>
            <person name="Itakura S."/>
            <person name="Fukuzumi Y."/>
            <person name="Fujimori Y."/>
            <person name="Komiyama M."/>
            <person name="Tashiro H."/>
            <person name="Tanigami A."/>
            <person name="Fujiwara T."/>
            <person name="Ono T."/>
            <person name="Yamada K."/>
            <person name="Fujii Y."/>
            <person name="Ozaki K."/>
            <person name="Hirao M."/>
            <person name="Ohmori Y."/>
            <person name="Kawabata A."/>
            <person name="Hikiji T."/>
            <person name="Kobatake N."/>
            <person name="Inagaki H."/>
            <person name="Ikema Y."/>
            <person name="Okamoto S."/>
            <person name="Okitani R."/>
            <person name="Kawakami T."/>
            <person name="Noguchi S."/>
            <person name="Itoh T."/>
            <person name="Shigeta K."/>
            <person name="Senba T."/>
            <person name="Matsumura K."/>
            <person name="Nakajima Y."/>
            <person name="Mizuno T."/>
            <person name="Morinaga M."/>
            <person name="Sasaki M."/>
            <person name="Togashi T."/>
            <person name="Oyama M."/>
            <person name="Hata H."/>
            <person name="Watanabe M."/>
            <person name="Komatsu T."/>
            <person name="Mizushima-Sugano J."/>
            <person name="Satoh T."/>
            <person name="Shirai Y."/>
            <person name="Takahashi Y."/>
            <person name="Nakagawa K."/>
            <person name="Okumura K."/>
            <person name="Nagase T."/>
            <person name="Nomura N."/>
            <person name="Kikuchi H."/>
            <person name="Masuho Y."/>
            <person name="Yamashita R."/>
            <person name="Nakai K."/>
            <person name="Yada T."/>
            <person name="Nakamura Y."/>
            <person name="Ohara O."/>
            <person name="Isogai T."/>
            <person name="Sugano S."/>
        </authorList>
    </citation>
    <scope>NUCLEOTIDE SEQUENCE [LARGE SCALE MRNA]</scope>
    <source>
        <tissue>Adrenal gland</tissue>
    </source>
</reference>
<feature type="chain" id="PRO_0000334685" description="Putative uncharacterized protein FLJ26174">
    <location>
        <begin position="1"/>
        <end position="131"/>
    </location>
</feature>
<feature type="region of interest" description="Disordered" evidence="1">
    <location>
        <begin position="13"/>
        <end position="32"/>
    </location>
</feature>
<dbReference type="EMBL" id="AK129685">
    <property type="protein sequence ID" value="BAC85217.1"/>
    <property type="molecule type" value="mRNA"/>
</dbReference>
<dbReference type="GlyGen" id="Q6ZPA2">
    <property type="glycosylation" value="1 site"/>
</dbReference>
<dbReference type="BioMuta" id="-"/>
<dbReference type="neXtProt" id="NX_Q6ZPA2"/>
<dbReference type="InParanoid" id="Q6ZPA2"/>
<dbReference type="PAN-GO" id="Q6ZPA2">
    <property type="GO annotations" value="0 GO annotations based on evolutionary models"/>
</dbReference>
<dbReference type="PhylomeDB" id="Q6ZPA2"/>
<dbReference type="Pharos" id="Q6ZPA2">
    <property type="development level" value="Tdark"/>
</dbReference>
<dbReference type="Proteomes" id="UP000005640">
    <property type="component" value="Unplaced"/>
</dbReference>
<dbReference type="RNAct" id="Q6ZPA2">
    <property type="molecule type" value="protein"/>
</dbReference>
<keyword id="KW-1185">Reference proteome</keyword>
<proteinExistence type="evidence at transcript level"/>
<accession>Q6ZPA2</accession>
<sequence length="131" mass="13472">MVPLFITSDSALTYSPLPEPPPTPALGGQRGPPTCQCPDFPYPVPPSEGCPSGRLLLSLHWDWGRGAGGSWSGGAWPGSPGWRLARGPAHGASAESLGPLGKALVTGWEGGWRGGQGGACSPWYFPIPAAL</sequence>